<accession>B7LX92</accession>
<protein>
    <recommendedName>
        <fullName evidence="1">Protein YcgL</fullName>
    </recommendedName>
</protein>
<gene>
    <name evidence="1" type="primary">ycgL</name>
    <name type="ordered locus">ECIAI1_1195</name>
</gene>
<organism>
    <name type="scientific">Escherichia coli O8 (strain IAI1)</name>
    <dbReference type="NCBI Taxonomy" id="585034"/>
    <lineage>
        <taxon>Bacteria</taxon>
        <taxon>Pseudomonadati</taxon>
        <taxon>Pseudomonadota</taxon>
        <taxon>Gammaproteobacteria</taxon>
        <taxon>Enterobacterales</taxon>
        <taxon>Enterobacteriaceae</taxon>
        <taxon>Escherichia</taxon>
    </lineage>
</organism>
<reference key="1">
    <citation type="journal article" date="2009" name="PLoS Genet.">
        <title>Organised genome dynamics in the Escherichia coli species results in highly diverse adaptive paths.</title>
        <authorList>
            <person name="Touchon M."/>
            <person name="Hoede C."/>
            <person name="Tenaillon O."/>
            <person name="Barbe V."/>
            <person name="Baeriswyl S."/>
            <person name="Bidet P."/>
            <person name="Bingen E."/>
            <person name="Bonacorsi S."/>
            <person name="Bouchier C."/>
            <person name="Bouvet O."/>
            <person name="Calteau A."/>
            <person name="Chiapello H."/>
            <person name="Clermont O."/>
            <person name="Cruveiller S."/>
            <person name="Danchin A."/>
            <person name="Diard M."/>
            <person name="Dossat C."/>
            <person name="Karoui M.E."/>
            <person name="Frapy E."/>
            <person name="Garry L."/>
            <person name="Ghigo J.M."/>
            <person name="Gilles A.M."/>
            <person name="Johnson J."/>
            <person name="Le Bouguenec C."/>
            <person name="Lescat M."/>
            <person name="Mangenot S."/>
            <person name="Martinez-Jehanne V."/>
            <person name="Matic I."/>
            <person name="Nassif X."/>
            <person name="Oztas S."/>
            <person name="Petit M.A."/>
            <person name="Pichon C."/>
            <person name="Rouy Z."/>
            <person name="Ruf C.S."/>
            <person name="Schneider D."/>
            <person name="Tourret J."/>
            <person name="Vacherie B."/>
            <person name="Vallenet D."/>
            <person name="Medigue C."/>
            <person name="Rocha E.P.C."/>
            <person name="Denamur E."/>
        </authorList>
    </citation>
    <scope>NUCLEOTIDE SEQUENCE [LARGE SCALE GENOMIC DNA]</scope>
    <source>
        <strain>IAI1</strain>
    </source>
</reference>
<sequence>MPKPGILKSKSMFCVIYRSSKRDQTYLYVEKKDDFSRVPEELMKGFGQPQLAMILPLDGRKKLVNADIEKVKLALTEQGYYLQLPPPPEDLLKQHLSVMGQKTDDTNK</sequence>
<name>YCGL_ECO8A</name>
<proteinExistence type="inferred from homology"/>
<evidence type="ECO:0000255" key="1">
    <source>
        <dbReference type="HAMAP-Rule" id="MF_01866"/>
    </source>
</evidence>
<feature type="chain" id="PRO_0000375303" description="Protein YcgL">
    <location>
        <begin position="1"/>
        <end position="108"/>
    </location>
</feature>
<feature type="domain" description="YcgL" evidence="1">
    <location>
        <begin position="12"/>
        <end position="96"/>
    </location>
</feature>
<dbReference type="EMBL" id="CU928160">
    <property type="protein sequence ID" value="CAQ98057.1"/>
    <property type="molecule type" value="Genomic_DNA"/>
</dbReference>
<dbReference type="SMR" id="B7LX92"/>
<dbReference type="KEGG" id="ecr:ECIAI1_1195"/>
<dbReference type="HOGENOM" id="CLU_155118_1_0_6"/>
<dbReference type="Gene3D" id="3.10.510.20">
    <property type="entry name" value="YcgL domain"/>
    <property type="match status" value="1"/>
</dbReference>
<dbReference type="HAMAP" id="MF_01866">
    <property type="entry name" value="UPF0745"/>
    <property type="match status" value="1"/>
</dbReference>
<dbReference type="InterPro" id="IPR038068">
    <property type="entry name" value="YcgL-like_sf"/>
</dbReference>
<dbReference type="InterPro" id="IPR027354">
    <property type="entry name" value="YcgL_dom"/>
</dbReference>
<dbReference type="PANTHER" id="PTHR38109">
    <property type="entry name" value="PROTEIN YCGL"/>
    <property type="match status" value="1"/>
</dbReference>
<dbReference type="PANTHER" id="PTHR38109:SF1">
    <property type="entry name" value="PROTEIN YCGL"/>
    <property type="match status" value="1"/>
</dbReference>
<dbReference type="Pfam" id="PF05166">
    <property type="entry name" value="YcgL"/>
    <property type="match status" value="1"/>
</dbReference>
<dbReference type="SUPFAM" id="SSF160191">
    <property type="entry name" value="YcgL-like"/>
    <property type="match status" value="1"/>
</dbReference>
<dbReference type="PROSITE" id="PS51648">
    <property type="entry name" value="YCGL"/>
    <property type="match status" value="1"/>
</dbReference>